<evidence type="ECO:0000255" key="1">
    <source>
        <dbReference type="HAMAP-Rule" id="MF_00144"/>
    </source>
</evidence>
<keyword id="KW-0067">ATP-binding</keyword>
<keyword id="KW-0963">Cytoplasm</keyword>
<keyword id="KW-1015">Disulfide bond</keyword>
<keyword id="KW-0547">Nucleotide-binding</keyword>
<keyword id="KW-1185">Reference proteome</keyword>
<keyword id="KW-0694">RNA-binding</keyword>
<keyword id="KW-0808">Transferase</keyword>
<keyword id="KW-0819">tRNA processing</keyword>
<keyword id="KW-0820">tRNA-binding</keyword>
<gene>
    <name evidence="1" type="primary">mnmA2</name>
    <name type="ordered locus">SYNAS_22940</name>
    <name type="ORF">SYN_00798</name>
</gene>
<dbReference type="EC" id="2.8.1.13" evidence="1"/>
<dbReference type="EMBL" id="CP000252">
    <property type="protein sequence ID" value="ABC78173.1"/>
    <property type="molecule type" value="Genomic_DNA"/>
</dbReference>
<dbReference type="SMR" id="Q2LVR6"/>
<dbReference type="STRING" id="56780.SYN_00798"/>
<dbReference type="KEGG" id="sat:SYN_00798"/>
<dbReference type="eggNOG" id="COG0482">
    <property type="taxonomic scope" value="Bacteria"/>
</dbReference>
<dbReference type="HOGENOM" id="CLU_035188_0_0_7"/>
<dbReference type="InParanoid" id="Q2LVR6"/>
<dbReference type="Proteomes" id="UP000001933">
    <property type="component" value="Chromosome"/>
</dbReference>
<dbReference type="GO" id="GO:0005737">
    <property type="term" value="C:cytoplasm"/>
    <property type="evidence" value="ECO:0007669"/>
    <property type="project" value="UniProtKB-SubCell"/>
</dbReference>
<dbReference type="GO" id="GO:0005524">
    <property type="term" value="F:ATP binding"/>
    <property type="evidence" value="ECO:0007669"/>
    <property type="project" value="UniProtKB-KW"/>
</dbReference>
<dbReference type="GO" id="GO:0000049">
    <property type="term" value="F:tRNA binding"/>
    <property type="evidence" value="ECO:0007669"/>
    <property type="project" value="UniProtKB-KW"/>
</dbReference>
<dbReference type="GO" id="GO:0103016">
    <property type="term" value="F:tRNA-uridine 2-sulfurtransferase activity"/>
    <property type="evidence" value="ECO:0007669"/>
    <property type="project" value="UniProtKB-EC"/>
</dbReference>
<dbReference type="GO" id="GO:0002143">
    <property type="term" value="P:tRNA wobble position uridine thiolation"/>
    <property type="evidence" value="ECO:0007669"/>
    <property type="project" value="TreeGrafter"/>
</dbReference>
<dbReference type="CDD" id="cd01998">
    <property type="entry name" value="MnmA_TRMU-like"/>
    <property type="match status" value="1"/>
</dbReference>
<dbReference type="FunFam" id="2.30.30.280:FF:000001">
    <property type="entry name" value="tRNA-specific 2-thiouridylase MnmA"/>
    <property type="match status" value="1"/>
</dbReference>
<dbReference type="Gene3D" id="2.30.30.280">
    <property type="entry name" value="Adenine nucleotide alpha hydrolases-like domains"/>
    <property type="match status" value="1"/>
</dbReference>
<dbReference type="Gene3D" id="3.40.50.620">
    <property type="entry name" value="HUPs"/>
    <property type="match status" value="1"/>
</dbReference>
<dbReference type="Gene3D" id="2.40.30.10">
    <property type="entry name" value="Translation factors"/>
    <property type="match status" value="1"/>
</dbReference>
<dbReference type="HAMAP" id="MF_00144">
    <property type="entry name" value="tRNA_thiouridyl_MnmA"/>
    <property type="match status" value="1"/>
</dbReference>
<dbReference type="InterPro" id="IPR004506">
    <property type="entry name" value="MnmA-like"/>
</dbReference>
<dbReference type="InterPro" id="IPR046885">
    <property type="entry name" value="MnmA-like_C"/>
</dbReference>
<dbReference type="InterPro" id="IPR046884">
    <property type="entry name" value="MnmA-like_central"/>
</dbReference>
<dbReference type="InterPro" id="IPR023382">
    <property type="entry name" value="MnmA-like_central_sf"/>
</dbReference>
<dbReference type="InterPro" id="IPR014729">
    <property type="entry name" value="Rossmann-like_a/b/a_fold"/>
</dbReference>
<dbReference type="NCBIfam" id="NF001138">
    <property type="entry name" value="PRK00143.1"/>
    <property type="match status" value="1"/>
</dbReference>
<dbReference type="NCBIfam" id="TIGR00420">
    <property type="entry name" value="trmU"/>
    <property type="match status" value="1"/>
</dbReference>
<dbReference type="PANTHER" id="PTHR11933:SF5">
    <property type="entry name" value="MITOCHONDRIAL TRNA-SPECIFIC 2-THIOURIDYLASE 1"/>
    <property type="match status" value="1"/>
</dbReference>
<dbReference type="PANTHER" id="PTHR11933">
    <property type="entry name" value="TRNA 5-METHYLAMINOMETHYL-2-THIOURIDYLATE -METHYLTRANSFERASE"/>
    <property type="match status" value="1"/>
</dbReference>
<dbReference type="Pfam" id="PF03054">
    <property type="entry name" value="tRNA_Me_trans"/>
    <property type="match status" value="1"/>
</dbReference>
<dbReference type="Pfam" id="PF20258">
    <property type="entry name" value="tRNA_Me_trans_C"/>
    <property type="match status" value="1"/>
</dbReference>
<dbReference type="Pfam" id="PF20259">
    <property type="entry name" value="tRNA_Me_trans_M"/>
    <property type="match status" value="1"/>
</dbReference>
<dbReference type="SUPFAM" id="SSF52402">
    <property type="entry name" value="Adenine nucleotide alpha hydrolases-like"/>
    <property type="match status" value="1"/>
</dbReference>
<proteinExistence type="inferred from homology"/>
<comment type="function">
    <text evidence="1">Catalyzes the 2-thiolation of uridine at the wobble position (U34) of tRNA, leading to the formation of s(2)U34.</text>
</comment>
<comment type="catalytic activity">
    <reaction evidence="1">
        <text>S-sulfanyl-L-cysteinyl-[protein] + uridine(34) in tRNA + AH2 + ATP = 2-thiouridine(34) in tRNA + L-cysteinyl-[protein] + A + AMP + diphosphate + H(+)</text>
        <dbReference type="Rhea" id="RHEA:47032"/>
        <dbReference type="Rhea" id="RHEA-COMP:10131"/>
        <dbReference type="Rhea" id="RHEA-COMP:11726"/>
        <dbReference type="Rhea" id="RHEA-COMP:11727"/>
        <dbReference type="Rhea" id="RHEA-COMP:11728"/>
        <dbReference type="ChEBI" id="CHEBI:13193"/>
        <dbReference type="ChEBI" id="CHEBI:15378"/>
        <dbReference type="ChEBI" id="CHEBI:17499"/>
        <dbReference type="ChEBI" id="CHEBI:29950"/>
        <dbReference type="ChEBI" id="CHEBI:30616"/>
        <dbReference type="ChEBI" id="CHEBI:33019"/>
        <dbReference type="ChEBI" id="CHEBI:61963"/>
        <dbReference type="ChEBI" id="CHEBI:65315"/>
        <dbReference type="ChEBI" id="CHEBI:87170"/>
        <dbReference type="ChEBI" id="CHEBI:456215"/>
        <dbReference type="EC" id="2.8.1.13"/>
    </reaction>
</comment>
<comment type="subcellular location">
    <subcellularLocation>
        <location evidence="1">Cytoplasm</location>
    </subcellularLocation>
</comment>
<comment type="similarity">
    <text evidence="1">Belongs to the MnmA/TRMU family.</text>
</comment>
<name>MNMA2_SYNAS</name>
<sequence length="342" mass="38285">MEGLHIFNGFSGSSEARARHAAHQLGIPLHVADVTETFDEEIVQYLTREYLVARTPNPCVVCNRKIKFKTLLYYADRLACHFVATGHYARVFHNRQTGRYALLRGLDQAKDQSYFLFLLGQEQLSRILFPLGELTKKEVRSVALTMGVEAVREKESQEICFIPDDDYKTFIERHMGSSPAIPGDIVDRSGRLLGSHNGIHSFTIGQRKGLHIAAPRPYYVLAIDREKNRVVVGHEEEQGFSGLIVSGVSWIDGESPREEVFETLVRIRYRHRGVSSVVCPLSAGDEICPATGRPADHEEAGDKLIIRFQEPQRAVAPGQAAVFYSDDRVIGGGWIEQGIPLD</sequence>
<organism>
    <name type="scientific">Syntrophus aciditrophicus (strain SB)</name>
    <dbReference type="NCBI Taxonomy" id="56780"/>
    <lineage>
        <taxon>Bacteria</taxon>
        <taxon>Pseudomonadati</taxon>
        <taxon>Thermodesulfobacteriota</taxon>
        <taxon>Syntrophia</taxon>
        <taxon>Syntrophales</taxon>
        <taxon>Syntrophaceae</taxon>
        <taxon>Syntrophus</taxon>
    </lineage>
</organism>
<reference key="1">
    <citation type="journal article" date="2007" name="Proc. Natl. Acad. Sci. U.S.A.">
        <title>The genome of Syntrophus aciditrophicus: life at the thermodynamic limit of microbial growth.</title>
        <authorList>
            <person name="McInerney M.J."/>
            <person name="Rohlin L."/>
            <person name="Mouttaki H."/>
            <person name="Kim U."/>
            <person name="Krupp R.S."/>
            <person name="Rios-Hernandez L."/>
            <person name="Sieber J."/>
            <person name="Struchtemeyer C.G."/>
            <person name="Bhattacharyya A."/>
            <person name="Campbell J.W."/>
            <person name="Gunsalus R.P."/>
        </authorList>
    </citation>
    <scope>NUCLEOTIDE SEQUENCE [LARGE SCALE GENOMIC DNA]</scope>
    <source>
        <strain>SB</strain>
    </source>
</reference>
<accession>Q2LVR6</accession>
<feature type="chain" id="PRO_0000349837" description="tRNA-specific 2-thiouridylase MnmA 2">
    <location>
        <begin position="1"/>
        <end position="342"/>
    </location>
</feature>
<feature type="region of interest" description="Interaction with tRNA" evidence="1">
    <location>
        <begin position="110"/>
        <end position="112"/>
    </location>
</feature>
<feature type="region of interest" description="Interaction with tRNA" evidence="1">
    <location>
        <begin position="268"/>
        <end position="269"/>
    </location>
</feature>
<feature type="active site" description="Nucleophile" evidence="1">
    <location>
        <position position="62"/>
    </location>
</feature>
<feature type="active site" description="Cysteine persulfide intermediate" evidence="1">
    <location>
        <position position="160"/>
    </location>
</feature>
<feature type="binding site" evidence="1">
    <location>
        <position position="86"/>
    </location>
    <ligand>
        <name>ATP</name>
        <dbReference type="ChEBI" id="CHEBI:30616"/>
    </ligand>
</feature>
<feature type="site" description="Interaction with tRNA" evidence="1">
    <location>
        <position position="87"/>
    </location>
</feature>
<feature type="site" description="Interaction with tRNA" evidence="1">
    <location>
        <position position="319"/>
    </location>
</feature>
<feature type="disulfide bond" description="Alternate" evidence="1">
    <location>
        <begin position="62"/>
        <end position="160"/>
    </location>
</feature>
<protein>
    <recommendedName>
        <fullName evidence="1">tRNA-specific 2-thiouridylase MnmA 2</fullName>
        <ecNumber evidence="1">2.8.1.13</ecNumber>
    </recommendedName>
</protein>